<gene>
    <name type="primary">Cdkl4</name>
    <name type="synonym">Gm942</name>
</gene>
<evidence type="ECO:0000255" key="1">
    <source>
        <dbReference type="PROSITE-ProRule" id="PRU00159"/>
    </source>
</evidence>
<evidence type="ECO:0000255" key="2">
    <source>
        <dbReference type="PROSITE-ProRule" id="PRU10027"/>
    </source>
</evidence>
<evidence type="ECO:0000256" key="3">
    <source>
        <dbReference type="SAM" id="MobiDB-lite"/>
    </source>
</evidence>
<evidence type="ECO:0000305" key="4"/>
<keyword id="KW-0067">ATP-binding</keyword>
<keyword id="KW-0963">Cytoplasm</keyword>
<keyword id="KW-0418">Kinase</keyword>
<keyword id="KW-0547">Nucleotide-binding</keyword>
<keyword id="KW-1185">Reference proteome</keyword>
<keyword id="KW-0723">Serine/threonine-protein kinase</keyword>
<keyword id="KW-0808">Transferase</keyword>
<feature type="chain" id="PRO_0000085825" description="Cyclin-dependent kinase-like 4">
    <location>
        <begin position="1"/>
        <end position="342"/>
    </location>
</feature>
<feature type="domain" description="Protein kinase" evidence="1">
    <location>
        <begin position="4"/>
        <end position="286"/>
    </location>
</feature>
<feature type="region of interest" description="Disordered" evidence="3">
    <location>
        <begin position="295"/>
        <end position="328"/>
    </location>
</feature>
<feature type="short sequence motif" description="[NKR]KIAxRE">
    <location>
        <begin position="45"/>
        <end position="51"/>
    </location>
</feature>
<feature type="active site" description="Proton acceptor" evidence="1 2">
    <location>
        <position position="126"/>
    </location>
</feature>
<feature type="binding site" evidence="1">
    <location>
        <begin position="10"/>
        <end position="18"/>
    </location>
    <ligand>
        <name>ATP</name>
        <dbReference type="ChEBI" id="CHEBI:30616"/>
    </ligand>
</feature>
<feature type="binding site" evidence="1">
    <location>
        <position position="33"/>
    </location>
    <ligand>
        <name>ATP</name>
        <dbReference type="ChEBI" id="CHEBI:30616"/>
    </ligand>
</feature>
<protein>
    <recommendedName>
        <fullName>Cyclin-dependent kinase-like 4</fullName>
        <ecNumber>2.7.11.22</ecNumber>
    </recommendedName>
</protein>
<accession>Q3TZA2</accession>
<accession>B2RSS7</accession>
<name>CDKL4_MOUSE</name>
<proteinExistence type="evidence at transcript level"/>
<comment type="catalytic activity">
    <reaction>
        <text>L-seryl-[protein] + ATP = O-phospho-L-seryl-[protein] + ADP + H(+)</text>
        <dbReference type="Rhea" id="RHEA:17989"/>
        <dbReference type="Rhea" id="RHEA-COMP:9863"/>
        <dbReference type="Rhea" id="RHEA-COMP:11604"/>
        <dbReference type="ChEBI" id="CHEBI:15378"/>
        <dbReference type="ChEBI" id="CHEBI:29999"/>
        <dbReference type="ChEBI" id="CHEBI:30616"/>
        <dbReference type="ChEBI" id="CHEBI:83421"/>
        <dbReference type="ChEBI" id="CHEBI:456216"/>
        <dbReference type="EC" id="2.7.11.22"/>
    </reaction>
</comment>
<comment type="catalytic activity">
    <reaction>
        <text>L-threonyl-[protein] + ATP = O-phospho-L-threonyl-[protein] + ADP + H(+)</text>
        <dbReference type="Rhea" id="RHEA:46608"/>
        <dbReference type="Rhea" id="RHEA-COMP:11060"/>
        <dbReference type="Rhea" id="RHEA-COMP:11605"/>
        <dbReference type="ChEBI" id="CHEBI:15378"/>
        <dbReference type="ChEBI" id="CHEBI:30013"/>
        <dbReference type="ChEBI" id="CHEBI:30616"/>
        <dbReference type="ChEBI" id="CHEBI:61977"/>
        <dbReference type="ChEBI" id="CHEBI:456216"/>
        <dbReference type="EC" id="2.7.11.22"/>
    </reaction>
</comment>
<comment type="subcellular location">
    <subcellularLocation>
        <location evidence="4">Cytoplasm</location>
    </subcellularLocation>
</comment>
<comment type="domain">
    <text>The [NKR]KIAxRE motif seems to be a cyclin-binding region.</text>
</comment>
<comment type="similarity">
    <text evidence="4">Belongs to the protein kinase superfamily. CMGC Ser/Thr protein kinase family. CDC2/CDKX subfamily.</text>
</comment>
<sequence length="342" mass="39446">MEKYEKLAKIGEGSYGVVFKCRNKSSGQVVAIKKFVESEDDRVVRKIALREIRMLKQLKHPNLVNLIEVFRRKRKMHLVFEYCDHTLLNELERNPNGVSDGVIKSVLWQTLQALNFCHKHNCIHRDVKPENILITKQGMIKICDFGFARILIPGDAYTDYVATRWYRAPELLVGDTKYGSSVDVWAVGCVFAELLTGQPLWPGKSDVDQLYLIIRTLGKLIPRHQSIFRSNQFFRGISIPEPEDMETLEEKFSNVQPVALSFMKGCLKMNPDERLTCAQLLDSAYFESFQEDQMKRKARSEGRSRRRQQNQLLPLIPGSHISPTPDGRKQVVQLKFDHLPNI</sequence>
<reference key="1">
    <citation type="journal article" date="2005" name="Science">
        <title>The transcriptional landscape of the mammalian genome.</title>
        <authorList>
            <person name="Carninci P."/>
            <person name="Kasukawa T."/>
            <person name="Katayama S."/>
            <person name="Gough J."/>
            <person name="Frith M.C."/>
            <person name="Maeda N."/>
            <person name="Oyama R."/>
            <person name="Ravasi T."/>
            <person name="Lenhard B."/>
            <person name="Wells C."/>
            <person name="Kodzius R."/>
            <person name="Shimokawa K."/>
            <person name="Bajic V.B."/>
            <person name="Brenner S.E."/>
            <person name="Batalov S."/>
            <person name="Forrest A.R."/>
            <person name="Zavolan M."/>
            <person name="Davis M.J."/>
            <person name="Wilming L.G."/>
            <person name="Aidinis V."/>
            <person name="Allen J.E."/>
            <person name="Ambesi-Impiombato A."/>
            <person name="Apweiler R."/>
            <person name="Aturaliya R.N."/>
            <person name="Bailey T.L."/>
            <person name="Bansal M."/>
            <person name="Baxter L."/>
            <person name="Beisel K.W."/>
            <person name="Bersano T."/>
            <person name="Bono H."/>
            <person name="Chalk A.M."/>
            <person name="Chiu K.P."/>
            <person name="Choudhary V."/>
            <person name="Christoffels A."/>
            <person name="Clutterbuck D.R."/>
            <person name="Crowe M.L."/>
            <person name="Dalla E."/>
            <person name="Dalrymple B.P."/>
            <person name="de Bono B."/>
            <person name="Della Gatta G."/>
            <person name="di Bernardo D."/>
            <person name="Down T."/>
            <person name="Engstrom P."/>
            <person name="Fagiolini M."/>
            <person name="Faulkner G."/>
            <person name="Fletcher C.F."/>
            <person name="Fukushima T."/>
            <person name="Furuno M."/>
            <person name="Futaki S."/>
            <person name="Gariboldi M."/>
            <person name="Georgii-Hemming P."/>
            <person name="Gingeras T.R."/>
            <person name="Gojobori T."/>
            <person name="Green R.E."/>
            <person name="Gustincich S."/>
            <person name="Harbers M."/>
            <person name="Hayashi Y."/>
            <person name="Hensch T.K."/>
            <person name="Hirokawa N."/>
            <person name="Hill D."/>
            <person name="Huminiecki L."/>
            <person name="Iacono M."/>
            <person name="Ikeo K."/>
            <person name="Iwama A."/>
            <person name="Ishikawa T."/>
            <person name="Jakt M."/>
            <person name="Kanapin A."/>
            <person name="Katoh M."/>
            <person name="Kawasawa Y."/>
            <person name="Kelso J."/>
            <person name="Kitamura H."/>
            <person name="Kitano H."/>
            <person name="Kollias G."/>
            <person name="Krishnan S.P."/>
            <person name="Kruger A."/>
            <person name="Kummerfeld S.K."/>
            <person name="Kurochkin I.V."/>
            <person name="Lareau L.F."/>
            <person name="Lazarevic D."/>
            <person name="Lipovich L."/>
            <person name="Liu J."/>
            <person name="Liuni S."/>
            <person name="McWilliam S."/>
            <person name="Madan Babu M."/>
            <person name="Madera M."/>
            <person name="Marchionni L."/>
            <person name="Matsuda H."/>
            <person name="Matsuzawa S."/>
            <person name="Miki H."/>
            <person name="Mignone F."/>
            <person name="Miyake S."/>
            <person name="Morris K."/>
            <person name="Mottagui-Tabar S."/>
            <person name="Mulder N."/>
            <person name="Nakano N."/>
            <person name="Nakauchi H."/>
            <person name="Ng P."/>
            <person name="Nilsson R."/>
            <person name="Nishiguchi S."/>
            <person name="Nishikawa S."/>
            <person name="Nori F."/>
            <person name="Ohara O."/>
            <person name="Okazaki Y."/>
            <person name="Orlando V."/>
            <person name="Pang K.C."/>
            <person name="Pavan W.J."/>
            <person name="Pavesi G."/>
            <person name="Pesole G."/>
            <person name="Petrovsky N."/>
            <person name="Piazza S."/>
            <person name="Reed J."/>
            <person name="Reid J.F."/>
            <person name="Ring B.Z."/>
            <person name="Ringwald M."/>
            <person name="Rost B."/>
            <person name="Ruan Y."/>
            <person name="Salzberg S.L."/>
            <person name="Sandelin A."/>
            <person name="Schneider C."/>
            <person name="Schoenbach C."/>
            <person name="Sekiguchi K."/>
            <person name="Semple C.A."/>
            <person name="Seno S."/>
            <person name="Sessa L."/>
            <person name="Sheng Y."/>
            <person name="Shibata Y."/>
            <person name="Shimada H."/>
            <person name="Shimada K."/>
            <person name="Silva D."/>
            <person name="Sinclair B."/>
            <person name="Sperling S."/>
            <person name="Stupka E."/>
            <person name="Sugiura K."/>
            <person name="Sultana R."/>
            <person name="Takenaka Y."/>
            <person name="Taki K."/>
            <person name="Tammoja K."/>
            <person name="Tan S.L."/>
            <person name="Tang S."/>
            <person name="Taylor M.S."/>
            <person name="Tegner J."/>
            <person name="Teichmann S.A."/>
            <person name="Ueda H.R."/>
            <person name="van Nimwegen E."/>
            <person name="Verardo R."/>
            <person name="Wei C.L."/>
            <person name="Yagi K."/>
            <person name="Yamanishi H."/>
            <person name="Zabarovsky E."/>
            <person name="Zhu S."/>
            <person name="Zimmer A."/>
            <person name="Hide W."/>
            <person name="Bult C."/>
            <person name="Grimmond S.M."/>
            <person name="Teasdale R.D."/>
            <person name="Liu E.T."/>
            <person name="Brusic V."/>
            <person name="Quackenbush J."/>
            <person name="Wahlestedt C."/>
            <person name="Mattick J.S."/>
            <person name="Hume D.A."/>
            <person name="Kai C."/>
            <person name="Sasaki D."/>
            <person name="Tomaru Y."/>
            <person name="Fukuda S."/>
            <person name="Kanamori-Katayama M."/>
            <person name="Suzuki M."/>
            <person name="Aoki J."/>
            <person name="Arakawa T."/>
            <person name="Iida J."/>
            <person name="Imamura K."/>
            <person name="Itoh M."/>
            <person name="Kato T."/>
            <person name="Kawaji H."/>
            <person name="Kawagashira N."/>
            <person name="Kawashima T."/>
            <person name="Kojima M."/>
            <person name="Kondo S."/>
            <person name="Konno H."/>
            <person name="Nakano K."/>
            <person name="Ninomiya N."/>
            <person name="Nishio T."/>
            <person name="Okada M."/>
            <person name="Plessy C."/>
            <person name="Shibata K."/>
            <person name="Shiraki T."/>
            <person name="Suzuki S."/>
            <person name="Tagami M."/>
            <person name="Waki K."/>
            <person name="Watahiki A."/>
            <person name="Okamura-Oho Y."/>
            <person name="Suzuki H."/>
            <person name="Kawai J."/>
            <person name="Hayashizaki Y."/>
        </authorList>
    </citation>
    <scope>NUCLEOTIDE SEQUENCE [LARGE SCALE MRNA]</scope>
    <source>
        <strain>C57BL/6J</strain>
        <tissue>Inner ear</tissue>
    </source>
</reference>
<reference key="2">
    <citation type="journal article" date="2004" name="Genome Res.">
        <title>The status, quality, and expansion of the NIH full-length cDNA project: the Mammalian Gene Collection (MGC).</title>
        <authorList>
            <consortium name="The MGC Project Team"/>
        </authorList>
    </citation>
    <scope>NUCLEOTIDE SEQUENCE [LARGE SCALE MRNA]</scope>
    <source>
        <tissue>Brain</tissue>
    </source>
</reference>
<organism>
    <name type="scientific">Mus musculus</name>
    <name type="common">Mouse</name>
    <dbReference type="NCBI Taxonomy" id="10090"/>
    <lineage>
        <taxon>Eukaryota</taxon>
        <taxon>Metazoa</taxon>
        <taxon>Chordata</taxon>
        <taxon>Craniata</taxon>
        <taxon>Vertebrata</taxon>
        <taxon>Euteleostomi</taxon>
        <taxon>Mammalia</taxon>
        <taxon>Eutheria</taxon>
        <taxon>Euarchontoglires</taxon>
        <taxon>Glires</taxon>
        <taxon>Rodentia</taxon>
        <taxon>Myomorpha</taxon>
        <taxon>Muroidea</taxon>
        <taxon>Muridae</taxon>
        <taxon>Murinae</taxon>
        <taxon>Mus</taxon>
        <taxon>Mus</taxon>
    </lineage>
</organism>
<dbReference type="EC" id="2.7.11.22"/>
<dbReference type="EMBL" id="AK157995">
    <property type="protein sequence ID" value="BAE34307.1"/>
    <property type="molecule type" value="mRNA"/>
</dbReference>
<dbReference type="EMBL" id="BC138986">
    <property type="protein sequence ID" value="AAI38987.1"/>
    <property type="molecule type" value="mRNA"/>
</dbReference>
<dbReference type="EMBL" id="BC138988">
    <property type="protein sequence ID" value="AAI38989.1"/>
    <property type="molecule type" value="mRNA"/>
</dbReference>
<dbReference type="CCDS" id="CCDS28992.1"/>
<dbReference type="RefSeq" id="NP_001028615.1">
    <property type="nucleotide sequence ID" value="NM_001033443.4"/>
</dbReference>
<dbReference type="RefSeq" id="NP_001347072.1">
    <property type="nucleotide sequence ID" value="NM_001360143.1"/>
</dbReference>
<dbReference type="RefSeq" id="NP_001347073.1">
    <property type="nucleotide sequence ID" value="NM_001360144.1"/>
</dbReference>
<dbReference type="RefSeq" id="XP_006524589.1">
    <property type="nucleotide sequence ID" value="XM_006524526.1"/>
</dbReference>
<dbReference type="RefSeq" id="XP_006524590.1">
    <property type="nucleotide sequence ID" value="XM_006524527.3"/>
</dbReference>
<dbReference type="RefSeq" id="XP_011244823.1">
    <property type="nucleotide sequence ID" value="XM_011246521.3"/>
</dbReference>
<dbReference type="SMR" id="Q3TZA2"/>
<dbReference type="FunCoup" id="Q3TZA2">
    <property type="interactions" value="503"/>
</dbReference>
<dbReference type="STRING" id="10090.ENSMUSP00000157063"/>
<dbReference type="GlyGen" id="Q3TZA2">
    <property type="glycosylation" value="1 site"/>
</dbReference>
<dbReference type="iPTMnet" id="Q3TZA2"/>
<dbReference type="PhosphoSitePlus" id="Q3TZA2"/>
<dbReference type="PaxDb" id="10090-ENSMUSP00000083732"/>
<dbReference type="ProteomicsDB" id="281355"/>
<dbReference type="Antibodypedia" id="29610">
    <property type="antibodies" value="192 antibodies from 25 providers"/>
</dbReference>
<dbReference type="DNASU" id="381113"/>
<dbReference type="Ensembl" id="ENSMUST00000086545.5">
    <property type="protein sequence ID" value="ENSMUSP00000083732.5"/>
    <property type="gene ID" value="ENSMUSG00000033966.9"/>
</dbReference>
<dbReference type="Ensembl" id="ENSMUST00000234349.2">
    <property type="protein sequence ID" value="ENSMUSP00000157316.2"/>
    <property type="gene ID" value="ENSMUSG00000033966.9"/>
</dbReference>
<dbReference type="Ensembl" id="ENSMUST00000234602.2">
    <property type="protein sequence ID" value="ENSMUSP00000157063.2"/>
    <property type="gene ID" value="ENSMUSG00000033966.9"/>
</dbReference>
<dbReference type="GeneID" id="381113"/>
<dbReference type="KEGG" id="mmu:381113"/>
<dbReference type="UCSC" id="uc008dri.2">
    <property type="organism name" value="mouse"/>
</dbReference>
<dbReference type="AGR" id="MGI:3587025"/>
<dbReference type="CTD" id="344387"/>
<dbReference type="MGI" id="MGI:3587025">
    <property type="gene designation" value="Cdkl4"/>
</dbReference>
<dbReference type="VEuPathDB" id="HostDB:ENSMUSG00000033966"/>
<dbReference type="eggNOG" id="KOG0593">
    <property type="taxonomic scope" value="Eukaryota"/>
</dbReference>
<dbReference type="GeneTree" id="ENSGT00940000161857"/>
<dbReference type="HOGENOM" id="CLU_000288_181_1_1"/>
<dbReference type="InParanoid" id="Q3TZA2"/>
<dbReference type="OMA" id="MEMFRQN"/>
<dbReference type="OrthoDB" id="548217at2759"/>
<dbReference type="PhylomeDB" id="Q3TZA2"/>
<dbReference type="TreeFam" id="TF101031"/>
<dbReference type="BioGRID-ORCS" id="381113">
    <property type="hits" value="0 hits in 81 CRISPR screens"/>
</dbReference>
<dbReference type="ChiTaRS" id="Cdkl4">
    <property type="organism name" value="mouse"/>
</dbReference>
<dbReference type="PRO" id="PR:Q3TZA2"/>
<dbReference type="Proteomes" id="UP000000589">
    <property type="component" value="Chromosome 17"/>
</dbReference>
<dbReference type="RNAct" id="Q3TZA2">
    <property type="molecule type" value="protein"/>
</dbReference>
<dbReference type="Bgee" id="ENSMUSG00000033966">
    <property type="expression patterns" value="Expressed in otolith organ and 97 other cell types or tissues"/>
</dbReference>
<dbReference type="GO" id="GO:0005737">
    <property type="term" value="C:cytoplasm"/>
    <property type="evidence" value="ECO:0007669"/>
    <property type="project" value="UniProtKB-SubCell"/>
</dbReference>
<dbReference type="GO" id="GO:0005524">
    <property type="term" value="F:ATP binding"/>
    <property type="evidence" value="ECO:0007669"/>
    <property type="project" value="UniProtKB-KW"/>
</dbReference>
<dbReference type="GO" id="GO:0004693">
    <property type="term" value="F:cyclin-dependent protein serine/threonine kinase activity"/>
    <property type="evidence" value="ECO:0007669"/>
    <property type="project" value="UniProtKB-EC"/>
</dbReference>
<dbReference type="GO" id="GO:0106310">
    <property type="term" value="F:protein serine kinase activity"/>
    <property type="evidence" value="ECO:0007669"/>
    <property type="project" value="RHEA"/>
</dbReference>
<dbReference type="CDD" id="cd07847">
    <property type="entry name" value="STKc_CDKL1_4"/>
    <property type="match status" value="1"/>
</dbReference>
<dbReference type="FunFam" id="1.10.510.10:FF:000191">
    <property type="entry name" value="cyclin-dependent kinase-like 1 isoform X1"/>
    <property type="match status" value="1"/>
</dbReference>
<dbReference type="FunFam" id="3.30.200.20:FF:000049">
    <property type="entry name" value="cyclin-dependent kinase-like 1 isoform X1"/>
    <property type="match status" value="1"/>
</dbReference>
<dbReference type="Gene3D" id="3.30.200.20">
    <property type="entry name" value="Phosphorylase Kinase, domain 1"/>
    <property type="match status" value="1"/>
</dbReference>
<dbReference type="Gene3D" id="1.10.510.10">
    <property type="entry name" value="Transferase(Phosphotransferase) domain 1"/>
    <property type="match status" value="1"/>
</dbReference>
<dbReference type="InterPro" id="IPR050108">
    <property type="entry name" value="CDK"/>
</dbReference>
<dbReference type="InterPro" id="IPR011009">
    <property type="entry name" value="Kinase-like_dom_sf"/>
</dbReference>
<dbReference type="InterPro" id="IPR000719">
    <property type="entry name" value="Prot_kinase_dom"/>
</dbReference>
<dbReference type="InterPro" id="IPR017441">
    <property type="entry name" value="Protein_kinase_ATP_BS"/>
</dbReference>
<dbReference type="InterPro" id="IPR008271">
    <property type="entry name" value="Ser/Thr_kinase_AS"/>
</dbReference>
<dbReference type="PANTHER" id="PTHR24056">
    <property type="entry name" value="CELL DIVISION PROTEIN KINASE"/>
    <property type="match status" value="1"/>
</dbReference>
<dbReference type="PANTHER" id="PTHR24056:SF120">
    <property type="entry name" value="CYCLIN-DEPENDENT KINASE-LIKE 4"/>
    <property type="match status" value="1"/>
</dbReference>
<dbReference type="Pfam" id="PF00069">
    <property type="entry name" value="Pkinase"/>
    <property type="match status" value="1"/>
</dbReference>
<dbReference type="SMART" id="SM00220">
    <property type="entry name" value="S_TKc"/>
    <property type="match status" value="1"/>
</dbReference>
<dbReference type="SUPFAM" id="SSF56112">
    <property type="entry name" value="Protein kinase-like (PK-like)"/>
    <property type="match status" value="1"/>
</dbReference>
<dbReference type="PROSITE" id="PS00107">
    <property type="entry name" value="PROTEIN_KINASE_ATP"/>
    <property type="match status" value="1"/>
</dbReference>
<dbReference type="PROSITE" id="PS50011">
    <property type="entry name" value="PROTEIN_KINASE_DOM"/>
    <property type="match status" value="1"/>
</dbReference>
<dbReference type="PROSITE" id="PS00108">
    <property type="entry name" value="PROTEIN_KINASE_ST"/>
    <property type="match status" value="1"/>
</dbReference>